<organism>
    <name type="scientific">Homo sapiens</name>
    <name type="common">Human</name>
    <dbReference type="NCBI Taxonomy" id="9606"/>
    <lineage>
        <taxon>Eukaryota</taxon>
        <taxon>Metazoa</taxon>
        <taxon>Chordata</taxon>
        <taxon>Craniata</taxon>
        <taxon>Vertebrata</taxon>
        <taxon>Euteleostomi</taxon>
        <taxon>Mammalia</taxon>
        <taxon>Eutheria</taxon>
        <taxon>Euarchontoglires</taxon>
        <taxon>Primates</taxon>
        <taxon>Haplorrhini</taxon>
        <taxon>Catarrhini</taxon>
        <taxon>Hominidae</taxon>
        <taxon>Homo</taxon>
    </lineage>
</organism>
<sequence length="420" mass="48470">MAELGKKYCVYCLAEVSPLRFRCTECQDIELCPECFSAGAEIGHHRRYHGYQLVDGGRFTLWGPEAEGGWTSREEQLLLDAIEQFGFGNWEDMAAHVGASRTPQEVMEHYVSMYIHGNLGKACIPDTIPNRVTDHTCPSGGPLSPSLTTPLPPLDISVAEQQQLGYMPLRDDYEIEYDQDAETLISGLSVNYDDDDVEIELKRAHVDMYVRKLKERQRRKNIARDYNLVPAFLGKDKKEKEKALKRKITKEEKELRLKLRPLYQFMSCKEFDDLFENMHKEKMLRAKIRELQRYRRNGITKMEESAEYEAARHKREKRKENKNLAGSKRGKEDGKDSEFAAIENLPGFELLSDREKVLCSSLNLSPARYVTVKTIIIKDHLQKRQGIPSKSRLPSYLDKVLKKRILNFLTESGWISRDAS</sequence>
<protein>
    <recommendedName>
        <fullName>Transcriptional adapter 2-beta</fullName>
    </recommendedName>
    <alternativeName>
        <fullName>ADA2-like protein beta</fullName>
        <shortName>ADA2-beta</shortName>
    </alternativeName>
</protein>
<proteinExistence type="evidence at protein level"/>
<accession>Q86TJ2</accession>
<accession>A0AUJ8</accession>
<accession>A4QMR7</accession>
<accession>B3KSN0</accession>
<accession>B3KU86</accession>
<accession>Q6MZG9</accession>
<reference key="1">
    <citation type="journal article" date="2004" name="Nat. Genet.">
        <title>Complete sequencing and characterization of 21,243 full-length human cDNAs.</title>
        <authorList>
            <person name="Ota T."/>
            <person name="Suzuki Y."/>
            <person name="Nishikawa T."/>
            <person name="Otsuki T."/>
            <person name="Sugiyama T."/>
            <person name="Irie R."/>
            <person name="Wakamatsu A."/>
            <person name="Hayashi K."/>
            <person name="Sato H."/>
            <person name="Nagai K."/>
            <person name="Kimura K."/>
            <person name="Makita H."/>
            <person name="Sekine M."/>
            <person name="Obayashi M."/>
            <person name="Nishi T."/>
            <person name="Shibahara T."/>
            <person name="Tanaka T."/>
            <person name="Ishii S."/>
            <person name="Yamamoto J."/>
            <person name="Saito K."/>
            <person name="Kawai Y."/>
            <person name="Isono Y."/>
            <person name="Nakamura Y."/>
            <person name="Nagahari K."/>
            <person name="Murakami K."/>
            <person name="Yasuda T."/>
            <person name="Iwayanagi T."/>
            <person name="Wagatsuma M."/>
            <person name="Shiratori A."/>
            <person name="Sudo H."/>
            <person name="Hosoiri T."/>
            <person name="Kaku Y."/>
            <person name="Kodaira H."/>
            <person name="Kondo H."/>
            <person name="Sugawara M."/>
            <person name="Takahashi M."/>
            <person name="Kanda K."/>
            <person name="Yokoi T."/>
            <person name="Furuya T."/>
            <person name="Kikkawa E."/>
            <person name="Omura Y."/>
            <person name="Abe K."/>
            <person name="Kamihara K."/>
            <person name="Katsuta N."/>
            <person name="Sato K."/>
            <person name="Tanikawa M."/>
            <person name="Yamazaki M."/>
            <person name="Ninomiya K."/>
            <person name="Ishibashi T."/>
            <person name="Yamashita H."/>
            <person name="Murakawa K."/>
            <person name="Fujimori K."/>
            <person name="Tanai H."/>
            <person name="Kimata M."/>
            <person name="Watanabe M."/>
            <person name="Hiraoka S."/>
            <person name="Chiba Y."/>
            <person name="Ishida S."/>
            <person name="Ono Y."/>
            <person name="Takiguchi S."/>
            <person name="Watanabe S."/>
            <person name="Yosida M."/>
            <person name="Hotuta T."/>
            <person name="Kusano J."/>
            <person name="Kanehori K."/>
            <person name="Takahashi-Fujii A."/>
            <person name="Hara H."/>
            <person name="Tanase T.-O."/>
            <person name="Nomura Y."/>
            <person name="Togiya S."/>
            <person name="Komai F."/>
            <person name="Hara R."/>
            <person name="Takeuchi K."/>
            <person name="Arita M."/>
            <person name="Imose N."/>
            <person name="Musashino K."/>
            <person name="Yuuki H."/>
            <person name="Oshima A."/>
            <person name="Sasaki N."/>
            <person name="Aotsuka S."/>
            <person name="Yoshikawa Y."/>
            <person name="Matsunawa H."/>
            <person name="Ichihara T."/>
            <person name="Shiohata N."/>
            <person name="Sano S."/>
            <person name="Moriya S."/>
            <person name="Momiyama H."/>
            <person name="Satoh N."/>
            <person name="Takami S."/>
            <person name="Terashima Y."/>
            <person name="Suzuki O."/>
            <person name="Nakagawa S."/>
            <person name="Senoh A."/>
            <person name="Mizoguchi H."/>
            <person name="Goto Y."/>
            <person name="Shimizu F."/>
            <person name="Wakebe H."/>
            <person name="Hishigaki H."/>
            <person name="Watanabe T."/>
            <person name="Sugiyama A."/>
            <person name="Takemoto M."/>
            <person name="Kawakami B."/>
            <person name="Yamazaki M."/>
            <person name="Watanabe K."/>
            <person name="Kumagai A."/>
            <person name="Itakura S."/>
            <person name="Fukuzumi Y."/>
            <person name="Fujimori Y."/>
            <person name="Komiyama M."/>
            <person name="Tashiro H."/>
            <person name="Tanigami A."/>
            <person name="Fujiwara T."/>
            <person name="Ono T."/>
            <person name="Yamada K."/>
            <person name="Fujii Y."/>
            <person name="Ozaki K."/>
            <person name="Hirao M."/>
            <person name="Ohmori Y."/>
            <person name="Kawabata A."/>
            <person name="Hikiji T."/>
            <person name="Kobatake N."/>
            <person name="Inagaki H."/>
            <person name="Ikema Y."/>
            <person name="Okamoto S."/>
            <person name="Okitani R."/>
            <person name="Kawakami T."/>
            <person name="Noguchi S."/>
            <person name="Itoh T."/>
            <person name="Shigeta K."/>
            <person name="Senba T."/>
            <person name="Matsumura K."/>
            <person name="Nakajima Y."/>
            <person name="Mizuno T."/>
            <person name="Morinaga M."/>
            <person name="Sasaki M."/>
            <person name="Togashi T."/>
            <person name="Oyama M."/>
            <person name="Hata H."/>
            <person name="Watanabe M."/>
            <person name="Komatsu T."/>
            <person name="Mizushima-Sugano J."/>
            <person name="Satoh T."/>
            <person name="Shirai Y."/>
            <person name="Takahashi Y."/>
            <person name="Nakagawa K."/>
            <person name="Okumura K."/>
            <person name="Nagase T."/>
            <person name="Nomura N."/>
            <person name="Kikuchi H."/>
            <person name="Masuho Y."/>
            <person name="Yamashita R."/>
            <person name="Nakai K."/>
            <person name="Yada T."/>
            <person name="Nakamura Y."/>
            <person name="Ohara O."/>
            <person name="Isogai T."/>
            <person name="Sugano S."/>
        </authorList>
    </citation>
    <scope>NUCLEOTIDE SEQUENCE [LARGE SCALE MRNA] (ISOFORMS 1 AND 3)</scope>
    <source>
        <tissue>Brain</tissue>
        <tissue>Uterus</tissue>
    </source>
</reference>
<reference key="2">
    <citation type="journal article" date="2005" name="Nature">
        <title>Generation and annotation of the DNA sequences of human chromosomes 2 and 4.</title>
        <authorList>
            <person name="Hillier L.W."/>
            <person name="Graves T.A."/>
            <person name="Fulton R.S."/>
            <person name="Fulton L.A."/>
            <person name="Pepin K.H."/>
            <person name="Minx P."/>
            <person name="Wagner-McPherson C."/>
            <person name="Layman D."/>
            <person name="Wylie K."/>
            <person name="Sekhon M."/>
            <person name="Becker M.C."/>
            <person name="Fewell G.A."/>
            <person name="Delehaunty K.D."/>
            <person name="Miner T.L."/>
            <person name="Nash W.E."/>
            <person name="Kremitzki C."/>
            <person name="Oddy L."/>
            <person name="Du H."/>
            <person name="Sun H."/>
            <person name="Bradshaw-Cordum H."/>
            <person name="Ali J."/>
            <person name="Carter J."/>
            <person name="Cordes M."/>
            <person name="Harris A."/>
            <person name="Isak A."/>
            <person name="van Brunt A."/>
            <person name="Nguyen C."/>
            <person name="Du F."/>
            <person name="Courtney L."/>
            <person name="Kalicki J."/>
            <person name="Ozersky P."/>
            <person name="Abbott S."/>
            <person name="Armstrong J."/>
            <person name="Belter E.A."/>
            <person name="Caruso L."/>
            <person name="Cedroni M."/>
            <person name="Cotton M."/>
            <person name="Davidson T."/>
            <person name="Desai A."/>
            <person name="Elliott G."/>
            <person name="Erb T."/>
            <person name="Fronick C."/>
            <person name="Gaige T."/>
            <person name="Haakenson W."/>
            <person name="Haglund K."/>
            <person name="Holmes A."/>
            <person name="Harkins R."/>
            <person name="Kim K."/>
            <person name="Kruchowski S.S."/>
            <person name="Strong C.M."/>
            <person name="Grewal N."/>
            <person name="Goyea E."/>
            <person name="Hou S."/>
            <person name="Levy A."/>
            <person name="Martinka S."/>
            <person name="Mead K."/>
            <person name="McLellan M.D."/>
            <person name="Meyer R."/>
            <person name="Randall-Maher J."/>
            <person name="Tomlinson C."/>
            <person name="Dauphin-Kohlberg S."/>
            <person name="Kozlowicz-Reilly A."/>
            <person name="Shah N."/>
            <person name="Swearengen-Shahid S."/>
            <person name="Snider J."/>
            <person name="Strong J.T."/>
            <person name="Thompson J."/>
            <person name="Yoakum M."/>
            <person name="Leonard S."/>
            <person name="Pearman C."/>
            <person name="Trani L."/>
            <person name="Radionenko M."/>
            <person name="Waligorski J.E."/>
            <person name="Wang C."/>
            <person name="Rock S.M."/>
            <person name="Tin-Wollam A.-M."/>
            <person name="Maupin R."/>
            <person name="Latreille P."/>
            <person name="Wendl M.C."/>
            <person name="Yang S.-P."/>
            <person name="Pohl C."/>
            <person name="Wallis J.W."/>
            <person name="Spieth J."/>
            <person name="Bieri T.A."/>
            <person name="Berkowicz N."/>
            <person name="Nelson J.O."/>
            <person name="Osborne J."/>
            <person name="Ding L."/>
            <person name="Meyer R."/>
            <person name="Sabo A."/>
            <person name="Shotland Y."/>
            <person name="Sinha P."/>
            <person name="Wohldmann P.E."/>
            <person name="Cook L.L."/>
            <person name="Hickenbotham M.T."/>
            <person name="Eldred J."/>
            <person name="Williams D."/>
            <person name="Jones T.A."/>
            <person name="She X."/>
            <person name="Ciccarelli F.D."/>
            <person name="Izaurralde E."/>
            <person name="Taylor J."/>
            <person name="Schmutz J."/>
            <person name="Myers R.M."/>
            <person name="Cox D.R."/>
            <person name="Huang X."/>
            <person name="McPherson J.D."/>
            <person name="Mardis E.R."/>
            <person name="Clifton S.W."/>
            <person name="Warren W.C."/>
            <person name="Chinwalla A.T."/>
            <person name="Eddy S.R."/>
            <person name="Marra M.A."/>
            <person name="Ovcharenko I."/>
            <person name="Furey T.S."/>
            <person name="Miller W."/>
            <person name="Eichler E.E."/>
            <person name="Bork P."/>
            <person name="Suyama M."/>
            <person name="Torrents D."/>
            <person name="Waterston R.H."/>
            <person name="Wilson R.K."/>
        </authorList>
    </citation>
    <scope>NUCLEOTIDE SEQUENCE [LARGE SCALE GENOMIC DNA]</scope>
</reference>
<reference key="3">
    <citation type="submission" date="2005-09" db="EMBL/GenBank/DDBJ databases">
        <authorList>
            <person name="Mural R.J."/>
            <person name="Istrail S."/>
            <person name="Sutton G.G."/>
            <person name="Florea L."/>
            <person name="Halpern A.L."/>
            <person name="Mobarry C.M."/>
            <person name="Lippert R."/>
            <person name="Walenz B."/>
            <person name="Shatkay H."/>
            <person name="Dew I."/>
            <person name="Miller J.R."/>
            <person name="Flanigan M.J."/>
            <person name="Edwards N.J."/>
            <person name="Bolanos R."/>
            <person name="Fasulo D."/>
            <person name="Halldorsson B.V."/>
            <person name="Hannenhalli S."/>
            <person name="Turner R."/>
            <person name="Yooseph S."/>
            <person name="Lu F."/>
            <person name="Nusskern D.R."/>
            <person name="Shue B.C."/>
            <person name="Zheng X.H."/>
            <person name="Zhong F."/>
            <person name="Delcher A.L."/>
            <person name="Huson D.H."/>
            <person name="Kravitz S.A."/>
            <person name="Mouchard L."/>
            <person name="Reinert K."/>
            <person name="Remington K.A."/>
            <person name="Clark A.G."/>
            <person name="Waterman M.S."/>
            <person name="Eichler E.E."/>
            <person name="Adams M.D."/>
            <person name="Hunkapiller M.W."/>
            <person name="Myers E.W."/>
            <person name="Venter J.C."/>
        </authorList>
    </citation>
    <scope>NUCLEOTIDE SEQUENCE [LARGE SCALE GENOMIC DNA]</scope>
</reference>
<reference key="4">
    <citation type="journal article" date="2004" name="Genome Res.">
        <title>The status, quality, and expansion of the NIH full-length cDNA project: the Mammalian Gene Collection (MGC).</title>
        <authorList>
            <consortium name="The MGC Project Team"/>
        </authorList>
    </citation>
    <scope>NUCLEOTIDE SEQUENCE [LARGE SCALE MRNA] (ISOFORMS 2 AND 3)</scope>
    <scope>NUCLEOTIDE SEQUENCE [LARGE SCALE MRNA] OF 1-282 (ISOFORM 1)</scope>
    <source>
        <tissue>PNS</tissue>
    </source>
</reference>
<reference key="5">
    <citation type="journal article" date="2007" name="BMC Genomics">
        <title>The full-ORF clone resource of the German cDNA consortium.</title>
        <authorList>
            <person name="Bechtel S."/>
            <person name="Rosenfelder H."/>
            <person name="Duda A."/>
            <person name="Schmidt C.P."/>
            <person name="Ernst U."/>
            <person name="Wellenreuther R."/>
            <person name="Mehrle A."/>
            <person name="Schuster C."/>
            <person name="Bahr A."/>
            <person name="Bloecker H."/>
            <person name="Heubner D."/>
            <person name="Hoerlein A."/>
            <person name="Michel G."/>
            <person name="Wedler H."/>
            <person name="Koehrer K."/>
            <person name="Ottenwaelder B."/>
            <person name="Poustka A."/>
            <person name="Wiemann S."/>
            <person name="Schupp I."/>
        </authorList>
    </citation>
    <scope>NUCLEOTIDE SEQUENCE [LARGE SCALE MRNA] OF 91-420</scope>
    <source>
        <tissue>Small intestine</tissue>
    </source>
</reference>
<reference key="6">
    <citation type="journal article" date="2003" name="Mol. Cell. Biol.">
        <title>A novel human Ada2 homologue functions with Gcn5 or Brg1 to coactivate transcription.</title>
        <authorList>
            <person name="Barlev N.A."/>
            <person name="Emelyanov A.V."/>
            <person name="Castagnino P."/>
            <person name="Zegerman P."/>
            <person name="Bannister A.J."/>
            <person name="Sepulveda M.A."/>
            <person name="Robert F."/>
            <person name="Tora L."/>
            <person name="Kouzarides T."/>
            <person name="Birshtein B.K."/>
            <person name="Berger S.L."/>
        </authorList>
    </citation>
    <scope>FUNCTION</scope>
    <scope>INTERACTION WITH GCN5L2; SMARCA4; SMARCE1 AND PAX5</scope>
    <scope>IDENTIFICATION IN THE TFTC-HAT COMPLEX WITH GCN5L2; TAF5; TAF6 AND TAF10</scope>
</reference>
<reference key="7">
    <citation type="journal article" date="2007" name="Oncogene">
        <title>Distinct GCN5/PCAF-containing complexes function as co-activators and are involved in transcription factor and global histone acetylation.</title>
        <authorList>
            <person name="Nagy Z."/>
            <person name="Tora L."/>
        </authorList>
    </citation>
    <scope>IDENTIFICATION IN THE TFTC-HAT COMPLEX</scope>
</reference>
<reference key="8">
    <citation type="journal article" date="2011" name="BMC Syst. Biol.">
        <title>Initial characterization of the human central proteome.</title>
        <authorList>
            <person name="Burkard T.R."/>
            <person name="Planyavsky M."/>
            <person name="Kaupe I."/>
            <person name="Breitwieser F.P."/>
            <person name="Buerckstuemmer T."/>
            <person name="Bennett K.L."/>
            <person name="Superti-Furga G."/>
            <person name="Colinge J."/>
        </authorList>
    </citation>
    <scope>IDENTIFICATION BY MASS SPECTROMETRY [LARGE SCALE ANALYSIS]</scope>
</reference>
<reference key="9">
    <citation type="journal article" date="2014" name="J. Proteomics">
        <title>An enzyme assisted RP-RPLC approach for in-depth analysis of human liver phosphoproteome.</title>
        <authorList>
            <person name="Bian Y."/>
            <person name="Song C."/>
            <person name="Cheng K."/>
            <person name="Dong M."/>
            <person name="Wang F."/>
            <person name="Huang J."/>
            <person name="Sun D."/>
            <person name="Wang L."/>
            <person name="Ye M."/>
            <person name="Zou H."/>
        </authorList>
    </citation>
    <scope>IDENTIFICATION BY MASS SPECTROMETRY [LARGE SCALE ANALYSIS]</scope>
    <source>
        <tissue>Liver</tissue>
    </source>
</reference>
<name>TAD2B_HUMAN</name>
<gene>
    <name type="primary">TADA2B</name>
    <name type="synonym">ADA2B</name>
</gene>
<keyword id="KW-0025">Alternative splicing</keyword>
<keyword id="KW-0479">Metal-binding</keyword>
<keyword id="KW-0539">Nucleus</keyword>
<keyword id="KW-1267">Proteomics identification</keyword>
<keyword id="KW-1185">Reference proteome</keyword>
<keyword id="KW-0804">Transcription</keyword>
<keyword id="KW-0805">Transcription regulation</keyword>
<keyword id="KW-0862">Zinc</keyword>
<keyword id="KW-0863">Zinc-finger</keyword>
<comment type="function">
    <text evidence="4">Coactivates PAX5-dependent transcription together with either SMARCA4 or GCN5L2.</text>
</comment>
<comment type="subunit">
    <text evidence="4 5">Interacts with GCN5L2, SMARCA4, SMARCE1 and PAX5. Component of the TFTC-HAT complex.</text>
</comment>
<comment type="interaction">
    <interactant intactId="EBI-2512219">
        <id>Q86TJ2</id>
    </interactant>
    <interactant intactId="EBI-372428">
        <id>Q9NY61</id>
        <label>AATF</label>
    </interactant>
    <organismsDiffer>false</organismsDiffer>
    <experiments>4</experiments>
</comment>
<comment type="interaction">
    <interactant intactId="EBI-18173581">
        <id>Q86TJ2-3</id>
    </interactant>
    <interactant intactId="EBI-17183751">
        <id>X5D778</id>
        <label>ANKRD11</label>
    </interactant>
    <organismsDiffer>false</organismsDiffer>
    <experiments>3</experiments>
</comment>
<comment type="interaction">
    <interactant intactId="EBI-18173581">
        <id>Q86TJ2-3</id>
    </interactant>
    <interactant intactId="EBI-749051">
        <id>Q8IYR0</id>
        <label>CFAP206</label>
    </interactant>
    <organismsDiffer>false</organismsDiffer>
    <experiments>3</experiments>
</comment>
<comment type="interaction">
    <interactant intactId="EBI-18173581">
        <id>Q86TJ2-3</id>
    </interactant>
    <interactant intactId="EBI-466029">
        <id>P42858</id>
        <label>HTT</label>
    </interactant>
    <organismsDiffer>false</organismsDiffer>
    <experiments>3</experiments>
</comment>
<comment type="interaction">
    <interactant intactId="EBI-18173581">
        <id>Q86TJ2-3</id>
    </interactant>
    <interactant intactId="EBI-10975473">
        <id>O60333-2</id>
        <label>KIF1B</label>
    </interactant>
    <organismsDiffer>false</organismsDiffer>
    <experiments>3</experiments>
</comment>
<comment type="interaction">
    <interactant intactId="EBI-18173581">
        <id>Q86TJ2-3</id>
    </interactant>
    <interactant intactId="EBI-348259">
        <id>Q96EZ8</id>
        <label>MCRS1</label>
    </interactant>
    <organismsDiffer>false</organismsDiffer>
    <experiments>3</experiments>
</comment>
<comment type="interaction">
    <interactant intactId="EBI-18173581">
        <id>Q86TJ2-3</id>
    </interactant>
    <interactant intactId="EBI-475646">
        <id>P07196</id>
        <label>NEFL</label>
    </interactant>
    <organismsDiffer>false</organismsDiffer>
    <experiments>3</experiments>
</comment>
<comment type="interaction">
    <interactant intactId="EBI-18173581">
        <id>Q86TJ2-3</id>
    </interactant>
    <interactant intactId="EBI-720609">
        <id>O76024</id>
        <label>WFS1</label>
    </interactant>
    <organismsDiffer>false</organismsDiffer>
    <experiments>3</experiments>
</comment>
<comment type="interaction">
    <interactant intactId="EBI-18173581">
        <id>Q86TJ2-3</id>
    </interactant>
    <interactant intactId="EBI-10183064">
        <id>Q8N5A5-2</id>
        <label>ZGPAT</label>
    </interactant>
    <organismsDiffer>false</organismsDiffer>
    <experiments>3</experiments>
</comment>
<comment type="subcellular location">
    <subcellularLocation>
        <location evidence="8">Nucleus</location>
    </subcellularLocation>
</comment>
<comment type="alternative products">
    <event type="alternative splicing"/>
    <isoform>
        <id>Q86TJ2-1</id>
        <name>1</name>
        <sequence type="displayed"/>
    </isoform>
    <isoform>
        <id>Q86TJ2-2</id>
        <name>2</name>
        <sequence type="described" ref="VSP_030110"/>
    </isoform>
    <isoform>
        <id>Q86TJ2-3</id>
        <name>3</name>
        <sequence type="described" ref="VSP_030109"/>
    </isoform>
</comment>
<comment type="sequence caution" evidence="8">
    <conflict type="miscellaneous discrepancy">
        <sequence resource="EMBL-CDS" id="AAH47794"/>
    </conflict>
    <text>Contaminating sequence. Potential poly-A sequence.</text>
</comment>
<comment type="sequence caution" evidence="8">
    <conflict type="erroneous initiation">
        <sequence resource="EMBL-CDS" id="AAI01338"/>
    </conflict>
    <text>Extended N-terminus.</text>
</comment>
<dbReference type="EMBL" id="AK093974">
    <property type="protein sequence ID" value="BAG52792.1"/>
    <property type="molecule type" value="mRNA"/>
</dbReference>
<dbReference type="EMBL" id="AK096655">
    <property type="protein sequence ID" value="BAG53348.1"/>
    <property type="molecule type" value="mRNA"/>
</dbReference>
<dbReference type="EMBL" id="AC097382">
    <property type="status" value="NOT_ANNOTATED_CDS"/>
    <property type="molecule type" value="Genomic_DNA"/>
</dbReference>
<dbReference type="EMBL" id="CH471131">
    <property type="protein sequence ID" value="EAW82372.1"/>
    <property type="molecule type" value="Genomic_DNA"/>
</dbReference>
<dbReference type="EMBL" id="BC047794">
    <property type="protein sequence ID" value="AAH47794.1"/>
    <property type="status" value="ALT_SEQ"/>
    <property type="molecule type" value="mRNA"/>
</dbReference>
<dbReference type="EMBL" id="BC101334">
    <property type="protein sequence ID" value="AAI01335.1"/>
    <property type="molecule type" value="mRNA"/>
</dbReference>
<dbReference type="EMBL" id="BC101335">
    <property type="protein sequence ID" value="AAI01336.1"/>
    <property type="molecule type" value="mRNA"/>
</dbReference>
<dbReference type="EMBL" id="BC101336">
    <property type="protein sequence ID" value="AAI01337.1"/>
    <property type="molecule type" value="mRNA"/>
</dbReference>
<dbReference type="EMBL" id="BC101337">
    <property type="protein sequence ID" value="AAI01338.1"/>
    <property type="status" value="ALT_INIT"/>
    <property type="molecule type" value="mRNA"/>
</dbReference>
<dbReference type="EMBL" id="BX641147">
    <property type="protein sequence ID" value="CAE46064.1"/>
    <property type="molecule type" value="mRNA"/>
</dbReference>
<dbReference type="CCDS" id="CCDS47007.1">
    <molecule id="Q86TJ2-1"/>
</dbReference>
<dbReference type="RefSeq" id="NP_689506.2">
    <molecule id="Q86TJ2-1"/>
    <property type="nucleotide sequence ID" value="NM_152293.2"/>
</dbReference>
<dbReference type="RefSeq" id="XP_011511897.1">
    <property type="nucleotide sequence ID" value="XM_011513595.1"/>
</dbReference>
<dbReference type="SMR" id="Q86TJ2"/>
<dbReference type="BioGRID" id="125041">
    <property type="interactions" value="89"/>
</dbReference>
<dbReference type="ComplexPortal" id="CPX-6802">
    <property type="entry name" value="SAGA complex, KAT2B variant"/>
</dbReference>
<dbReference type="ComplexPortal" id="CPX-900">
    <property type="entry name" value="SAGA complex, KAT2A variant"/>
</dbReference>
<dbReference type="CORUM" id="Q86TJ2"/>
<dbReference type="FunCoup" id="Q86TJ2">
    <property type="interactions" value="1441"/>
</dbReference>
<dbReference type="IntAct" id="Q86TJ2">
    <property type="interactions" value="57"/>
</dbReference>
<dbReference type="MINT" id="Q86TJ2"/>
<dbReference type="STRING" id="9606.ENSP00000308022"/>
<dbReference type="iPTMnet" id="Q86TJ2"/>
<dbReference type="PhosphoSitePlus" id="Q86TJ2"/>
<dbReference type="BioMuta" id="TADA2B"/>
<dbReference type="DMDM" id="166225686"/>
<dbReference type="jPOST" id="Q86TJ2"/>
<dbReference type="MassIVE" id="Q86TJ2"/>
<dbReference type="PaxDb" id="9606-ENSP00000308022"/>
<dbReference type="PeptideAtlas" id="Q86TJ2"/>
<dbReference type="ProteomicsDB" id="69705">
    <molecule id="Q86TJ2-1"/>
</dbReference>
<dbReference type="ProteomicsDB" id="69706">
    <molecule id="Q86TJ2-2"/>
</dbReference>
<dbReference type="ProteomicsDB" id="69707">
    <molecule id="Q86TJ2-3"/>
</dbReference>
<dbReference type="Pumba" id="Q86TJ2"/>
<dbReference type="Antibodypedia" id="22702">
    <property type="antibodies" value="88 antibodies from 20 providers"/>
</dbReference>
<dbReference type="DNASU" id="93624"/>
<dbReference type="Ensembl" id="ENST00000310074.8">
    <molecule id="Q86TJ2-1"/>
    <property type="protein sequence ID" value="ENSP00000308022.6"/>
    <property type="gene ID" value="ENSG00000173011.12"/>
</dbReference>
<dbReference type="Ensembl" id="ENST00000512388.1">
    <molecule id="Q86TJ2-2"/>
    <property type="protein sequence ID" value="ENSP00000423947.1"/>
    <property type="gene ID" value="ENSG00000173011.12"/>
</dbReference>
<dbReference type="Ensembl" id="ENST00000515646.1">
    <molecule id="Q86TJ2-3"/>
    <property type="protein sequence ID" value="ENSP00000423181.1"/>
    <property type="gene ID" value="ENSG00000173011.12"/>
</dbReference>
<dbReference type="GeneID" id="93624"/>
<dbReference type="KEGG" id="hsa:93624"/>
<dbReference type="MANE-Select" id="ENST00000310074.8">
    <property type="protein sequence ID" value="ENSP00000308022.6"/>
    <property type="RefSeq nucleotide sequence ID" value="NM_152293.3"/>
    <property type="RefSeq protein sequence ID" value="NP_689506.2"/>
</dbReference>
<dbReference type="UCSC" id="uc003gjw.5">
    <molecule id="Q86TJ2-1"/>
    <property type="organism name" value="human"/>
</dbReference>
<dbReference type="AGR" id="HGNC:30781"/>
<dbReference type="CTD" id="93624"/>
<dbReference type="DisGeNET" id="93624"/>
<dbReference type="GeneCards" id="TADA2B"/>
<dbReference type="HGNC" id="HGNC:30781">
    <property type="gene designation" value="TADA2B"/>
</dbReference>
<dbReference type="HPA" id="ENSG00000173011">
    <property type="expression patterns" value="Low tissue specificity"/>
</dbReference>
<dbReference type="MIM" id="608790">
    <property type="type" value="gene"/>
</dbReference>
<dbReference type="neXtProt" id="NX_Q86TJ2"/>
<dbReference type="OpenTargets" id="ENSG00000173011"/>
<dbReference type="PharmGKB" id="PA165664556"/>
<dbReference type="VEuPathDB" id="HostDB:ENSG00000173011"/>
<dbReference type="eggNOG" id="KOG0457">
    <property type="taxonomic scope" value="Eukaryota"/>
</dbReference>
<dbReference type="GeneTree" id="ENSGT00940000157318"/>
<dbReference type="HOGENOM" id="CLU_018273_4_2_1"/>
<dbReference type="InParanoid" id="Q86TJ2"/>
<dbReference type="OMA" id="ISPACYI"/>
<dbReference type="OrthoDB" id="270417at2759"/>
<dbReference type="PAN-GO" id="Q86TJ2">
    <property type="GO annotations" value="7 GO annotations based on evolutionary models"/>
</dbReference>
<dbReference type="PhylomeDB" id="Q86TJ2"/>
<dbReference type="TreeFam" id="TF313975"/>
<dbReference type="PathwayCommons" id="Q86TJ2"/>
<dbReference type="Reactome" id="R-HSA-3214847">
    <property type="pathway name" value="HATs acetylate histones"/>
</dbReference>
<dbReference type="Reactome" id="R-HSA-5689880">
    <property type="pathway name" value="Ub-specific processing proteases"/>
</dbReference>
<dbReference type="SignaLink" id="Q86TJ2"/>
<dbReference type="SIGNOR" id="Q86TJ2"/>
<dbReference type="BioGRID-ORCS" id="93624">
    <property type="hits" value="232 hits in 1213 CRISPR screens"/>
</dbReference>
<dbReference type="ChiTaRS" id="TADA2B">
    <property type="organism name" value="human"/>
</dbReference>
<dbReference type="GenomeRNAi" id="93624"/>
<dbReference type="Pharos" id="Q86TJ2">
    <property type="development level" value="Tbio"/>
</dbReference>
<dbReference type="PRO" id="PR:Q86TJ2"/>
<dbReference type="Proteomes" id="UP000005640">
    <property type="component" value="Chromosome 4"/>
</dbReference>
<dbReference type="RNAct" id="Q86TJ2">
    <property type="molecule type" value="protein"/>
</dbReference>
<dbReference type="Bgee" id="ENSG00000173011">
    <property type="expression patterns" value="Expressed in tibialis anterior and 192 other cell types or tissues"/>
</dbReference>
<dbReference type="ExpressionAtlas" id="Q86TJ2">
    <property type="expression patterns" value="baseline and differential"/>
</dbReference>
<dbReference type="GO" id="GO:0005654">
    <property type="term" value="C:nucleoplasm"/>
    <property type="evidence" value="ECO:0000304"/>
    <property type="project" value="Reactome"/>
</dbReference>
<dbReference type="GO" id="GO:0005634">
    <property type="term" value="C:nucleus"/>
    <property type="evidence" value="ECO:0000318"/>
    <property type="project" value="GO_Central"/>
</dbReference>
<dbReference type="GO" id="GO:0000124">
    <property type="term" value="C:SAGA complex"/>
    <property type="evidence" value="ECO:0000303"/>
    <property type="project" value="ComplexPortal"/>
</dbReference>
<dbReference type="GO" id="GO:0070461">
    <property type="term" value="C:SAGA-type complex"/>
    <property type="evidence" value="ECO:0000314"/>
    <property type="project" value="BHF-UCL"/>
</dbReference>
<dbReference type="GO" id="GO:0003682">
    <property type="term" value="F:chromatin binding"/>
    <property type="evidence" value="ECO:0000318"/>
    <property type="project" value="GO_Central"/>
</dbReference>
<dbReference type="GO" id="GO:0003713">
    <property type="term" value="F:transcription coactivator activity"/>
    <property type="evidence" value="ECO:0000318"/>
    <property type="project" value="GO_Central"/>
</dbReference>
<dbReference type="GO" id="GO:0008270">
    <property type="term" value="F:zinc ion binding"/>
    <property type="evidence" value="ECO:0007669"/>
    <property type="project" value="UniProtKB-KW"/>
</dbReference>
<dbReference type="GO" id="GO:0006338">
    <property type="term" value="P:chromatin remodeling"/>
    <property type="evidence" value="ECO:0000318"/>
    <property type="project" value="GO_Central"/>
</dbReference>
<dbReference type="GO" id="GO:0045893">
    <property type="term" value="P:positive regulation of DNA-templated transcription"/>
    <property type="evidence" value="ECO:0000303"/>
    <property type="project" value="ComplexPortal"/>
</dbReference>
<dbReference type="GO" id="GO:0006282">
    <property type="term" value="P:regulation of DNA repair"/>
    <property type="evidence" value="ECO:0000303"/>
    <property type="project" value="ComplexPortal"/>
</dbReference>
<dbReference type="GO" id="GO:0043484">
    <property type="term" value="P:regulation of RNA splicing"/>
    <property type="evidence" value="ECO:0000303"/>
    <property type="project" value="ComplexPortal"/>
</dbReference>
<dbReference type="GO" id="GO:0006357">
    <property type="term" value="P:regulation of transcription by RNA polymerase II"/>
    <property type="evidence" value="ECO:0000318"/>
    <property type="project" value="GO_Central"/>
</dbReference>
<dbReference type="CDD" id="cd00167">
    <property type="entry name" value="SANT"/>
    <property type="match status" value="1"/>
</dbReference>
<dbReference type="CDD" id="cd02335">
    <property type="entry name" value="ZZ_ADA2"/>
    <property type="match status" value="1"/>
</dbReference>
<dbReference type="FunFam" id="1.10.10.10:FF:000185">
    <property type="entry name" value="Transcriptional adapter"/>
    <property type="match status" value="1"/>
</dbReference>
<dbReference type="FunFam" id="1.10.10.60:FF:000170">
    <property type="entry name" value="Transcriptional adapter"/>
    <property type="match status" value="1"/>
</dbReference>
<dbReference type="FunFam" id="3.30.60.90:FF:000011">
    <property type="entry name" value="Transcriptional adapter"/>
    <property type="match status" value="1"/>
</dbReference>
<dbReference type="Gene3D" id="3.30.60.90">
    <property type="match status" value="1"/>
</dbReference>
<dbReference type="Gene3D" id="1.10.10.60">
    <property type="entry name" value="Homeodomain-like"/>
    <property type="match status" value="1"/>
</dbReference>
<dbReference type="Gene3D" id="1.10.10.10">
    <property type="entry name" value="Winged helix-like DNA-binding domain superfamily/Winged helix DNA-binding domain"/>
    <property type="match status" value="1"/>
</dbReference>
<dbReference type="InterPro" id="IPR041983">
    <property type="entry name" value="ADA2-like_ZZ"/>
</dbReference>
<dbReference type="InterPro" id="IPR016827">
    <property type="entry name" value="Ada2/TADA2"/>
</dbReference>
<dbReference type="InterPro" id="IPR056267">
    <property type="entry name" value="Ada2b_C"/>
</dbReference>
<dbReference type="InterPro" id="IPR009057">
    <property type="entry name" value="Homeodomain-like_sf"/>
</dbReference>
<dbReference type="InterPro" id="IPR001005">
    <property type="entry name" value="SANT/Myb"/>
</dbReference>
<dbReference type="InterPro" id="IPR017884">
    <property type="entry name" value="SANT_dom"/>
</dbReference>
<dbReference type="InterPro" id="IPR055141">
    <property type="entry name" value="TADA2A_B-like_dom"/>
</dbReference>
<dbReference type="InterPro" id="IPR036388">
    <property type="entry name" value="WH-like_DNA-bd_sf"/>
</dbReference>
<dbReference type="InterPro" id="IPR000433">
    <property type="entry name" value="Znf_ZZ"/>
</dbReference>
<dbReference type="InterPro" id="IPR043145">
    <property type="entry name" value="Znf_ZZ_sf"/>
</dbReference>
<dbReference type="PANTHER" id="PTHR12374:SF63">
    <property type="entry name" value="TRANSCRIPTIONAL ADAPTER 2-BETA"/>
    <property type="match status" value="1"/>
</dbReference>
<dbReference type="PANTHER" id="PTHR12374">
    <property type="entry name" value="TRANSCRIPTIONAL ADAPTOR 2 ADA2 -RELATED"/>
    <property type="match status" value="1"/>
</dbReference>
<dbReference type="Pfam" id="PF00249">
    <property type="entry name" value="Myb_DNA-binding"/>
    <property type="match status" value="1"/>
</dbReference>
<dbReference type="Pfam" id="PF22941">
    <property type="entry name" value="TADA2A-like_3rd"/>
    <property type="match status" value="1"/>
</dbReference>
<dbReference type="Pfam" id="PF24533">
    <property type="entry name" value="Tri-helical_Ada2b_C"/>
    <property type="match status" value="1"/>
</dbReference>
<dbReference type="Pfam" id="PF25299">
    <property type="entry name" value="ZZ_ADA2"/>
    <property type="match status" value="1"/>
</dbReference>
<dbReference type="PIRSF" id="PIRSF025024">
    <property type="entry name" value="Transcriptional_adaptor_2"/>
    <property type="match status" value="1"/>
</dbReference>
<dbReference type="SMART" id="SM00717">
    <property type="entry name" value="SANT"/>
    <property type="match status" value="1"/>
</dbReference>
<dbReference type="SMART" id="SM00291">
    <property type="entry name" value="ZnF_ZZ"/>
    <property type="match status" value="1"/>
</dbReference>
<dbReference type="SUPFAM" id="SSF46689">
    <property type="entry name" value="Homeodomain-like"/>
    <property type="match status" value="2"/>
</dbReference>
<dbReference type="SUPFAM" id="SSF57850">
    <property type="entry name" value="RING/U-box"/>
    <property type="match status" value="1"/>
</dbReference>
<dbReference type="PROSITE" id="PS51293">
    <property type="entry name" value="SANT"/>
    <property type="match status" value="1"/>
</dbReference>
<dbReference type="PROSITE" id="PS01357">
    <property type="entry name" value="ZF_ZZ_1"/>
    <property type="match status" value="1"/>
</dbReference>
<dbReference type="PROSITE" id="PS50135">
    <property type="entry name" value="ZF_ZZ_2"/>
    <property type="match status" value="1"/>
</dbReference>
<feature type="chain" id="PRO_0000313711" description="Transcriptional adapter 2-beta">
    <location>
        <begin position="1"/>
        <end position="420"/>
    </location>
</feature>
<feature type="domain" description="SANT" evidence="2">
    <location>
        <begin position="65"/>
        <end position="118"/>
    </location>
</feature>
<feature type="zinc finger region" description="ZZ-type" evidence="1">
    <location>
        <begin position="4"/>
        <end position="59"/>
    </location>
</feature>
<feature type="region of interest" description="Disordered" evidence="3">
    <location>
        <begin position="305"/>
        <end position="335"/>
    </location>
</feature>
<feature type="binding site" evidence="1">
    <location>
        <position position="9"/>
    </location>
    <ligand>
        <name>Zn(2+)</name>
        <dbReference type="ChEBI" id="CHEBI:29105"/>
        <label>1</label>
    </ligand>
</feature>
<feature type="binding site" evidence="1">
    <location>
        <position position="12"/>
    </location>
    <ligand>
        <name>Zn(2+)</name>
        <dbReference type="ChEBI" id="CHEBI:29105"/>
        <label>1</label>
    </ligand>
</feature>
<feature type="binding site" evidence="1">
    <location>
        <position position="23"/>
    </location>
    <ligand>
        <name>Zn(2+)</name>
        <dbReference type="ChEBI" id="CHEBI:29105"/>
        <label>2</label>
    </ligand>
</feature>
<feature type="binding site" evidence="1">
    <location>
        <position position="26"/>
    </location>
    <ligand>
        <name>Zn(2+)</name>
        <dbReference type="ChEBI" id="CHEBI:29105"/>
        <label>2</label>
    </ligand>
</feature>
<feature type="binding site" evidence="1">
    <location>
        <position position="32"/>
    </location>
    <ligand>
        <name>Zn(2+)</name>
        <dbReference type="ChEBI" id="CHEBI:29105"/>
        <label>1</label>
    </ligand>
</feature>
<feature type="binding site" evidence="1">
    <location>
        <position position="35"/>
    </location>
    <ligand>
        <name>Zn(2+)</name>
        <dbReference type="ChEBI" id="CHEBI:29105"/>
        <label>1</label>
    </ligand>
</feature>
<feature type="binding site" evidence="1">
    <location>
        <position position="45"/>
    </location>
    <ligand>
        <name>Zn(2+)</name>
        <dbReference type="ChEBI" id="CHEBI:29105"/>
        <label>2</label>
    </ligand>
</feature>
<feature type="binding site" evidence="1">
    <location>
        <position position="49"/>
    </location>
    <ligand>
        <name>Zn(2+)</name>
        <dbReference type="ChEBI" id="CHEBI:29105"/>
        <label>2</label>
    </ligand>
</feature>
<feature type="splice variant" id="VSP_030109" description="In isoform 3." evidence="6 7">
    <location>
        <begin position="1"/>
        <end position="92"/>
    </location>
</feature>
<feature type="splice variant" id="VSP_030110" description="In isoform 2." evidence="7">
    <location>
        <begin position="16"/>
        <end position="90"/>
    </location>
</feature>
<feature type="sequence conflict" description="In Ref. 5; CAE46064." evidence="8" ref="5">
    <original>E</original>
    <variation>K</variation>
    <location>
        <position position="251"/>
    </location>
</feature>
<evidence type="ECO:0000255" key="1">
    <source>
        <dbReference type="PROSITE-ProRule" id="PRU00228"/>
    </source>
</evidence>
<evidence type="ECO:0000255" key="2">
    <source>
        <dbReference type="PROSITE-ProRule" id="PRU00624"/>
    </source>
</evidence>
<evidence type="ECO:0000256" key="3">
    <source>
        <dbReference type="SAM" id="MobiDB-lite"/>
    </source>
</evidence>
<evidence type="ECO:0000269" key="4">
    <source>
    </source>
</evidence>
<evidence type="ECO:0000269" key="5">
    <source>
    </source>
</evidence>
<evidence type="ECO:0000303" key="6">
    <source>
    </source>
</evidence>
<evidence type="ECO:0000303" key="7">
    <source>
    </source>
</evidence>
<evidence type="ECO:0000305" key="8"/>